<reference key="1">
    <citation type="journal article" date="2005" name="Nature">
        <title>The map-based sequence of the rice genome.</title>
        <authorList>
            <consortium name="International rice genome sequencing project (IRGSP)"/>
        </authorList>
    </citation>
    <scope>NUCLEOTIDE SEQUENCE [LARGE SCALE GENOMIC DNA]</scope>
    <source>
        <strain>cv. Nipponbare</strain>
    </source>
</reference>
<reference key="2">
    <citation type="journal article" date="2008" name="Nucleic Acids Res.">
        <title>The rice annotation project database (RAP-DB): 2008 update.</title>
        <authorList>
            <consortium name="The rice annotation project (RAP)"/>
        </authorList>
    </citation>
    <scope>GENOME REANNOTATION</scope>
    <source>
        <strain>cv. Nipponbare</strain>
    </source>
</reference>
<reference key="3">
    <citation type="journal article" date="2013" name="Rice">
        <title>Improvement of the Oryza sativa Nipponbare reference genome using next generation sequence and optical map data.</title>
        <authorList>
            <person name="Kawahara Y."/>
            <person name="de la Bastide M."/>
            <person name="Hamilton J.P."/>
            <person name="Kanamori H."/>
            <person name="McCombie W.R."/>
            <person name="Ouyang S."/>
            <person name="Schwartz D.C."/>
            <person name="Tanaka T."/>
            <person name="Wu J."/>
            <person name="Zhou S."/>
            <person name="Childs K.L."/>
            <person name="Davidson R.M."/>
            <person name="Lin H."/>
            <person name="Quesada-Ocampo L."/>
            <person name="Vaillancourt B."/>
            <person name="Sakai H."/>
            <person name="Lee S.S."/>
            <person name="Kim J."/>
            <person name="Numa H."/>
            <person name="Itoh T."/>
            <person name="Buell C.R."/>
            <person name="Matsumoto T."/>
        </authorList>
    </citation>
    <scope>GENOME REANNOTATION</scope>
    <source>
        <strain>cv. Nipponbare</strain>
    </source>
</reference>
<reference key="4">
    <citation type="journal article" date="2003" name="Science">
        <title>Collection, mapping, and annotation of over 28,000 cDNA clones from japonica rice.</title>
        <authorList>
            <consortium name="The rice full-length cDNA consortium"/>
        </authorList>
    </citation>
    <scope>NUCLEOTIDE SEQUENCE [LARGE SCALE MRNA]</scope>
    <source>
        <strain>cv. Nipponbare</strain>
    </source>
</reference>
<organism>
    <name type="scientific">Oryza sativa subsp. japonica</name>
    <name type="common">Rice</name>
    <dbReference type="NCBI Taxonomy" id="39947"/>
    <lineage>
        <taxon>Eukaryota</taxon>
        <taxon>Viridiplantae</taxon>
        <taxon>Streptophyta</taxon>
        <taxon>Embryophyta</taxon>
        <taxon>Tracheophyta</taxon>
        <taxon>Spermatophyta</taxon>
        <taxon>Magnoliopsida</taxon>
        <taxon>Liliopsida</taxon>
        <taxon>Poales</taxon>
        <taxon>Poaceae</taxon>
        <taxon>BOP clade</taxon>
        <taxon>Oryzoideae</taxon>
        <taxon>Oryzeae</taxon>
        <taxon>Oryzinae</taxon>
        <taxon>Oryza</taxon>
        <taxon>Oryza sativa</taxon>
    </lineage>
</organism>
<comment type="function">
    <text evidence="1">Catalyzes the NAD-dependent reduction of a carbon-carbon double bond in an enoyl moiety that is covalently linked to an acyl carrier protein (ACP). Catalyzes the last reduction step in the de novo synthesis cycle of fatty acids. Involved in the elongation cycle of fatty acids which are used in lipid metabolism. Required for normal plant growth (By similarity).</text>
</comment>
<comment type="catalytic activity">
    <reaction>
        <text>a 2,3-saturated acyl-[ACP] + NAD(+) = a (2E)-enoyl-[ACP] + NADH + H(+)</text>
        <dbReference type="Rhea" id="RHEA:10240"/>
        <dbReference type="Rhea" id="RHEA-COMP:9925"/>
        <dbReference type="Rhea" id="RHEA-COMP:9926"/>
        <dbReference type="ChEBI" id="CHEBI:15378"/>
        <dbReference type="ChEBI" id="CHEBI:57540"/>
        <dbReference type="ChEBI" id="CHEBI:57945"/>
        <dbReference type="ChEBI" id="CHEBI:78784"/>
        <dbReference type="ChEBI" id="CHEBI:78785"/>
        <dbReference type="EC" id="1.3.1.9"/>
    </reaction>
</comment>
<comment type="pathway">
    <text>Lipid metabolism; fatty acid biosynthesis.</text>
</comment>
<comment type="subunit">
    <text evidence="1">Homotetramer.</text>
</comment>
<comment type="subcellular location">
    <subcellularLocation>
        <location evidence="3">Plastid</location>
        <location evidence="3">Chloroplast</location>
    </subcellularLocation>
</comment>
<comment type="similarity">
    <text evidence="3">Belongs to the short-chain dehydrogenases/reductases (SDR) family. FabI subfamily.</text>
</comment>
<keyword id="KW-0150">Chloroplast</keyword>
<keyword id="KW-0275">Fatty acid biosynthesis</keyword>
<keyword id="KW-0276">Fatty acid metabolism</keyword>
<keyword id="KW-0444">Lipid biosynthesis</keyword>
<keyword id="KW-0443">Lipid metabolism</keyword>
<keyword id="KW-0520">NAD</keyword>
<keyword id="KW-0560">Oxidoreductase</keyword>
<keyword id="KW-0934">Plastid</keyword>
<keyword id="KW-1185">Reference proteome</keyword>
<keyword id="KW-0809">Transit peptide</keyword>
<evidence type="ECO:0000250" key="1"/>
<evidence type="ECO:0000255" key="2"/>
<evidence type="ECO:0000305" key="3"/>
<proteinExistence type="evidence at transcript level"/>
<gene>
    <name type="ordered locus">Os09g0277800</name>
    <name type="ordered locus">LOC_Os09g10600</name>
    <name type="ORF">P0701E06.10</name>
</gene>
<protein>
    <recommendedName>
        <fullName>Enoyl-[acyl-carrier-protein] reductase [NADH] 2, chloroplastic</fullName>
        <shortName>ENR</shortName>
        <ecNumber>1.3.1.9</ecNumber>
    </recommendedName>
    <alternativeName>
        <fullName>NADH-dependent enoyl-ACP reductase</fullName>
    </alternativeName>
</protein>
<sequence length="371" mass="39021">MGASVTTGLQMAAARPCIPACQRLLGSRAALPSFGRALSTQTGFASCRKTASAGPFVSLNHKRFAVRAMSAQGLPIDLRGKRAFIAGVADDNGYGWAIAKALAAAGAEILVGTWVPALNIFETSLRRGKFDESRKLPDGSLMEITKVYPLDAVFDSPEDVPDDVKANKRYAGSSNWTVKEVAETVKNDFGTIDILVHSLANGPEVKNSLLETSRKGYLAAVSASSYSFISLLQHFLPIMNPGGATISLTYIASERTIPGYGGGMSSAKAALESDTRVLAYEAGRKGKIRVNTISAGPLGSRAAKAIGFIEKMIEYSYVNAPLQKELLADEVGNTAAFLASPLASAITGSTIYVDNGLNTMGLALDSPTLST</sequence>
<dbReference type="EC" id="1.3.1.9"/>
<dbReference type="EMBL" id="AP005594">
    <property type="protein sequence ID" value="BAD26009.1"/>
    <property type="molecule type" value="Genomic_DNA"/>
</dbReference>
<dbReference type="EMBL" id="AP008215">
    <property type="protein sequence ID" value="BAF24666.1"/>
    <property type="molecule type" value="Genomic_DNA"/>
</dbReference>
<dbReference type="EMBL" id="AP014965">
    <property type="protein sequence ID" value="BAT07201.1"/>
    <property type="molecule type" value="Genomic_DNA"/>
</dbReference>
<dbReference type="EMBL" id="AK103141">
    <property type="protein sequence ID" value="BAG95916.1"/>
    <property type="molecule type" value="mRNA"/>
</dbReference>
<dbReference type="RefSeq" id="XP_015610600.1">
    <property type="nucleotide sequence ID" value="XM_015755114.1"/>
</dbReference>
<dbReference type="SMR" id="Q6H5J0"/>
<dbReference type="FunCoup" id="Q6H5J0">
    <property type="interactions" value="767"/>
</dbReference>
<dbReference type="STRING" id="39947.Q6H5J0"/>
<dbReference type="PaxDb" id="39947-Q6H5J0"/>
<dbReference type="EnsemblPlants" id="Os09t0277800-01">
    <property type="protein sequence ID" value="Os09t0277800-01"/>
    <property type="gene ID" value="Os09g0277800"/>
</dbReference>
<dbReference type="Gramene" id="Os09t0277800-01">
    <property type="protein sequence ID" value="Os09t0277800-01"/>
    <property type="gene ID" value="Os09g0277800"/>
</dbReference>
<dbReference type="KEGG" id="dosa:Os09g0277800"/>
<dbReference type="eggNOG" id="KOG0725">
    <property type="taxonomic scope" value="Eukaryota"/>
</dbReference>
<dbReference type="HOGENOM" id="CLU_010194_10_0_1"/>
<dbReference type="InParanoid" id="Q6H5J0"/>
<dbReference type="OMA" id="GILDMIH"/>
<dbReference type="OrthoDB" id="417891at2759"/>
<dbReference type="UniPathway" id="UPA00094"/>
<dbReference type="Proteomes" id="UP000000763">
    <property type="component" value="Chromosome 9"/>
</dbReference>
<dbReference type="Proteomes" id="UP000059680">
    <property type="component" value="Chromosome 9"/>
</dbReference>
<dbReference type="GO" id="GO:0009507">
    <property type="term" value="C:chloroplast"/>
    <property type="evidence" value="ECO:0007669"/>
    <property type="project" value="UniProtKB-SubCell"/>
</dbReference>
<dbReference type="GO" id="GO:0004318">
    <property type="term" value="F:enoyl-[acyl-carrier-protein] reductase (NADH) activity"/>
    <property type="evidence" value="ECO:0007669"/>
    <property type="project" value="UniProtKB-EC"/>
</dbReference>
<dbReference type="GO" id="GO:0006633">
    <property type="term" value="P:fatty acid biosynthetic process"/>
    <property type="evidence" value="ECO:0007669"/>
    <property type="project" value="UniProtKB-UniPathway"/>
</dbReference>
<dbReference type="CDD" id="cd05372">
    <property type="entry name" value="ENR_SDR"/>
    <property type="match status" value="1"/>
</dbReference>
<dbReference type="FunFam" id="1.10.8.400:FF:000001">
    <property type="entry name" value="Enoyl-[acyl-carrier-protein] reductase [NADH]"/>
    <property type="match status" value="1"/>
</dbReference>
<dbReference type="FunFam" id="3.40.50.720:FF:000192">
    <property type="entry name" value="Enoyl-[acyl-carrier-protein] reductase [NADH]"/>
    <property type="match status" value="1"/>
</dbReference>
<dbReference type="Gene3D" id="1.10.8.400">
    <property type="entry name" value="Enoyl acyl carrier protein reductase"/>
    <property type="match status" value="1"/>
</dbReference>
<dbReference type="Gene3D" id="3.40.50.720">
    <property type="entry name" value="NAD(P)-binding Rossmann-like Domain"/>
    <property type="match status" value="1"/>
</dbReference>
<dbReference type="InterPro" id="IPR014358">
    <property type="entry name" value="Enoyl-ACP_Rdtase_NADH"/>
</dbReference>
<dbReference type="InterPro" id="IPR036291">
    <property type="entry name" value="NAD(P)-bd_dom_sf"/>
</dbReference>
<dbReference type="InterPro" id="IPR002347">
    <property type="entry name" value="SDR_fam"/>
</dbReference>
<dbReference type="NCBIfam" id="NF004957">
    <property type="entry name" value="PRK06300.1"/>
    <property type="match status" value="1"/>
</dbReference>
<dbReference type="PANTHER" id="PTHR43159">
    <property type="entry name" value="ENOYL-[ACYL-CARRIER-PROTEIN] REDUCTASE"/>
    <property type="match status" value="1"/>
</dbReference>
<dbReference type="PANTHER" id="PTHR43159:SF7">
    <property type="entry name" value="ENOYL-[ACYL-CARRIER-PROTEIN] REDUCTASE [NADH] 2, CHLOROPLASTIC"/>
    <property type="match status" value="1"/>
</dbReference>
<dbReference type="Pfam" id="PF13561">
    <property type="entry name" value="adh_short_C2"/>
    <property type="match status" value="1"/>
</dbReference>
<dbReference type="PRINTS" id="PR00081">
    <property type="entry name" value="GDHRDH"/>
</dbReference>
<dbReference type="SUPFAM" id="SSF51735">
    <property type="entry name" value="NAD(P)-binding Rossmann-fold domains"/>
    <property type="match status" value="1"/>
</dbReference>
<feature type="transit peptide" description="Chloroplast" evidence="2">
    <location>
        <begin position="1"/>
        <end position="67"/>
    </location>
</feature>
<feature type="chain" id="PRO_0000420280" description="Enoyl-[acyl-carrier-protein] reductase [NADH] 2, chloroplastic">
    <location>
        <begin position="68"/>
        <end position="371"/>
    </location>
</feature>
<feature type="active site" description="Proton acceptor" evidence="1">
    <location>
        <position position="250"/>
    </location>
</feature>
<feature type="active site" description="Proton acceptor" evidence="1">
    <location>
        <position position="260"/>
    </location>
</feature>
<feature type="binding site" evidence="1">
    <location>
        <position position="87"/>
    </location>
    <ligand>
        <name>NAD(+)</name>
        <dbReference type="ChEBI" id="CHEBI:57540"/>
    </ligand>
</feature>
<feature type="binding site" evidence="1">
    <location>
        <position position="94"/>
    </location>
    <ligand>
        <name>NAD(+)</name>
        <dbReference type="ChEBI" id="CHEBI:57540"/>
    </ligand>
</feature>
<feature type="binding site" evidence="1">
    <location>
        <begin position="151"/>
        <end position="152"/>
    </location>
    <ligand>
        <name>NAD(+)</name>
        <dbReference type="ChEBI" id="CHEBI:57540"/>
    </ligand>
</feature>
<feature type="binding site" evidence="1">
    <location>
        <begin position="198"/>
        <end position="199"/>
    </location>
    <ligand>
        <name>NAD(+)</name>
        <dbReference type="ChEBI" id="CHEBI:57540"/>
    </ligand>
</feature>
<feature type="binding site" evidence="1">
    <location>
        <position position="248"/>
    </location>
    <ligand>
        <name>NAD(+)</name>
        <dbReference type="ChEBI" id="CHEBI:57540"/>
    </ligand>
</feature>
<feature type="binding site" evidence="1">
    <location>
        <position position="268"/>
    </location>
    <ligand>
        <name>NAD(+)</name>
        <dbReference type="ChEBI" id="CHEBI:57540"/>
    </ligand>
</feature>
<feature type="binding site" evidence="1">
    <location>
        <begin position="298"/>
        <end position="302"/>
    </location>
    <ligand>
        <name>NAD(+)</name>
        <dbReference type="ChEBI" id="CHEBI:57540"/>
    </ligand>
</feature>
<name>FABI2_ORYSJ</name>
<accession>Q6H5J0</accession>
<accession>A0A0P0XJW8</accession>